<accession>A4HFE4</accession>
<dbReference type="EC" id="3.1.-.-" evidence="1"/>
<dbReference type="EMBL" id="FR799002">
    <property type="protein sequence ID" value="CAM45304.1"/>
    <property type="molecule type" value="Genomic_DNA"/>
</dbReference>
<dbReference type="RefSeq" id="XP_001565788.1">
    <property type="nucleotide sequence ID" value="XM_001565738.1"/>
</dbReference>
<dbReference type="SMR" id="A4HFE4"/>
<dbReference type="FunCoup" id="A4HFE4">
    <property type="interactions" value="557"/>
</dbReference>
<dbReference type="STRING" id="5660.A4HFE4"/>
<dbReference type="GeneID" id="5416647"/>
<dbReference type="KEGG" id="lbz:LBRM_27_0270"/>
<dbReference type="VEuPathDB" id="TriTrypDB:LbrM.27.0270"/>
<dbReference type="InParanoid" id="A4HFE4"/>
<dbReference type="OMA" id="MGIPWVQ"/>
<dbReference type="Proteomes" id="UP000007258">
    <property type="component" value="Chromosome 27"/>
</dbReference>
<dbReference type="GO" id="GO:0005739">
    <property type="term" value="C:mitochondrion"/>
    <property type="evidence" value="ECO:0007669"/>
    <property type="project" value="UniProtKB-SubCell"/>
</dbReference>
<dbReference type="GO" id="GO:0005730">
    <property type="term" value="C:nucleolus"/>
    <property type="evidence" value="ECO:0007669"/>
    <property type="project" value="UniProtKB-SubCell"/>
</dbReference>
<dbReference type="GO" id="GO:0005654">
    <property type="term" value="C:nucleoplasm"/>
    <property type="evidence" value="ECO:0007669"/>
    <property type="project" value="UniProtKB-SubCell"/>
</dbReference>
<dbReference type="GO" id="GO:0008409">
    <property type="term" value="F:5'-3' exonuclease activity"/>
    <property type="evidence" value="ECO:0007669"/>
    <property type="project" value="UniProtKB-UniRule"/>
</dbReference>
<dbReference type="GO" id="GO:0017108">
    <property type="term" value="F:5'-flap endonuclease activity"/>
    <property type="evidence" value="ECO:0007669"/>
    <property type="project" value="UniProtKB-UniRule"/>
</dbReference>
<dbReference type="GO" id="GO:0003677">
    <property type="term" value="F:DNA binding"/>
    <property type="evidence" value="ECO:0007669"/>
    <property type="project" value="UniProtKB-UniRule"/>
</dbReference>
<dbReference type="GO" id="GO:0000287">
    <property type="term" value="F:magnesium ion binding"/>
    <property type="evidence" value="ECO:0007669"/>
    <property type="project" value="UniProtKB-UniRule"/>
</dbReference>
<dbReference type="GO" id="GO:0006284">
    <property type="term" value="P:base-excision repair"/>
    <property type="evidence" value="ECO:0007669"/>
    <property type="project" value="UniProtKB-UniRule"/>
</dbReference>
<dbReference type="GO" id="GO:0043137">
    <property type="term" value="P:DNA replication, removal of RNA primer"/>
    <property type="evidence" value="ECO:0007669"/>
    <property type="project" value="UniProtKB-UniRule"/>
</dbReference>
<dbReference type="CDD" id="cd09907">
    <property type="entry name" value="H3TH_FEN1-Euk"/>
    <property type="match status" value="1"/>
</dbReference>
<dbReference type="CDD" id="cd09867">
    <property type="entry name" value="PIN_FEN1"/>
    <property type="match status" value="1"/>
</dbReference>
<dbReference type="FunFam" id="1.10.150.20:FF:000009">
    <property type="entry name" value="Flap endonuclease 1"/>
    <property type="match status" value="1"/>
</dbReference>
<dbReference type="FunFam" id="3.40.50.1010:FF:000016">
    <property type="entry name" value="Flap endonuclease 1"/>
    <property type="match status" value="1"/>
</dbReference>
<dbReference type="Gene3D" id="1.10.150.20">
    <property type="entry name" value="5' to 3' exonuclease, C-terminal subdomain"/>
    <property type="match status" value="1"/>
</dbReference>
<dbReference type="Gene3D" id="3.40.50.1010">
    <property type="entry name" value="5'-nuclease"/>
    <property type="match status" value="1"/>
</dbReference>
<dbReference type="HAMAP" id="MF_00614">
    <property type="entry name" value="Fen"/>
    <property type="match status" value="1"/>
</dbReference>
<dbReference type="InterPro" id="IPR036279">
    <property type="entry name" value="5-3_exonuclease_C_sf"/>
</dbReference>
<dbReference type="InterPro" id="IPR023426">
    <property type="entry name" value="Flap_endonuc"/>
</dbReference>
<dbReference type="InterPro" id="IPR008918">
    <property type="entry name" value="HhH2"/>
</dbReference>
<dbReference type="InterPro" id="IPR029060">
    <property type="entry name" value="PIN-like_dom_sf"/>
</dbReference>
<dbReference type="InterPro" id="IPR006086">
    <property type="entry name" value="XPG-I_dom"/>
</dbReference>
<dbReference type="InterPro" id="IPR006084">
    <property type="entry name" value="XPG/Rad2"/>
</dbReference>
<dbReference type="InterPro" id="IPR019974">
    <property type="entry name" value="XPG_CS"/>
</dbReference>
<dbReference type="InterPro" id="IPR006085">
    <property type="entry name" value="XPG_DNA_repair_N"/>
</dbReference>
<dbReference type="PANTHER" id="PTHR11081:SF9">
    <property type="entry name" value="FLAP ENDONUCLEASE 1"/>
    <property type="match status" value="1"/>
</dbReference>
<dbReference type="PANTHER" id="PTHR11081">
    <property type="entry name" value="FLAP ENDONUCLEASE FAMILY MEMBER"/>
    <property type="match status" value="1"/>
</dbReference>
<dbReference type="Pfam" id="PF00867">
    <property type="entry name" value="XPG_I"/>
    <property type="match status" value="1"/>
</dbReference>
<dbReference type="Pfam" id="PF00752">
    <property type="entry name" value="XPG_N"/>
    <property type="match status" value="1"/>
</dbReference>
<dbReference type="PRINTS" id="PR00853">
    <property type="entry name" value="XPGRADSUPER"/>
</dbReference>
<dbReference type="SMART" id="SM00279">
    <property type="entry name" value="HhH2"/>
    <property type="match status" value="1"/>
</dbReference>
<dbReference type="SMART" id="SM00484">
    <property type="entry name" value="XPGI"/>
    <property type="match status" value="1"/>
</dbReference>
<dbReference type="SMART" id="SM00485">
    <property type="entry name" value="XPGN"/>
    <property type="match status" value="1"/>
</dbReference>
<dbReference type="SUPFAM" id="SSF47807">
    <property type="entry name" value="5' to 3' exonuclease, C-terminal subdomain"/>
    <property type="match status" value="1"/>
</dbReference>
<dbReference type="SUPFAM" id="SSF88723">
    <property type="entry name" value="PIN domain-like"/>
    <property type="match status" value="1"/>
</dbReference>
<dbReference type="PROSITE" id="PS00841">
    <property type="entry name" value="XPG_1"/>
    <property type="match status" value="1"/>
</dbReference>
<dbReference type="PROSITE" id="PS00842">
    <property type="entry name" value="XPG_2"/>
    <property type="match status" value="1"/>
</dbReference>
<proteinExistence type="inferred from homology"/>
<evidence type="ECO:0000255" key="1">
    <source>
        <dbReference type="HAMAP-Rule" id="MF_03140"/>
    </source>
</evidence>
<name>FEN1_LEIBR</name>
<reference key="1">
    <citation type="journal article" date="2007" name="Nat. Genet.">
        <title>Comparative genomic analysis of three Leishmania species that cause diverse human disease.</title>
        <authorList>
            <person name="Peacock C.S."/>
            <person name="Seeger K."/>
            <person name="Harris D."/>
            <person name="Murphy L."/>
            <person name="Ruiz J.C."/>
            <person name="Quail M.A."/>
            <person name="Peters N."/>
            <person name="Adlem E."/>
            <person name="Tivey A."/>
            <person name="Aslett M."/>
            <person name="Kerhornou A."/>
            <person name="Ivens A."/>
            <person name="Fraser A."/>
            <person name="Rajandream M.-A."/>
            <person name="Carver T."/>
            <person name="Norbertczak H."/>
            <person name="Chillingworth T."/>
            <person name="Hance Z."/>
            <person name="Jagels K."/>
            <person name="Moule S."/>
            <person name="Ormond D."/>
            <person name="Rutter S."/>
            <person name="Sqaures R."/>
            <person name="Whitehead S."/>
            <person name="Rabbinowitsch E."/>
            <person name="Arrowsmith C."/>
            <person name="White B."/>
            <person name="Thurston S."/>
            <person name="Bringaud F."/>
            <person name="Baldauf S.L."/>
            <person name="Faulconbridge A."/>
            <person name="Jeffares D."/>
            <person name="Depledge D.P."/>
            <person name="Oyola S.O."/>
            <person name="Hilley J.D."/>
            <person name="Brito L.O."/>
            <person name="Tosi L.R.O."/>
            <person name="Barrell B."/>
            <person name="Cruz A.K."/>
            <person name="Mottram J.C."/>
            <person name="Smith D.F."/>
            <person name="Berriman M."/>
        </authorList>
    </citation>
    <scope>NUCLEOTIDE SEQUENCE [LARGE SCALE GENOMIC DNA]</scope>
    <source>
        <strain>MHOM/BR/75/M2904</strain>
    </source>
</reference>
<sequence>MGILGLSKLLYDKSPNAIRERELKSFFGRRIAIDASMSIYQFIIAMKGFQDGQGMELTNEQGDVTSHLNGLFARTLRMIDEGIKPIYVFDGKPPKLKADELETRRQKAAEAEREFEKAKDAGDDEMMEKMSKRTVRVSREQIEESKKLLQLMGVPVIQAPSEAEAQCAELVKKGKAWAVGTEDMDALTFGSTVMLRHLNISDAKKRPIAEIHLDEVLQATGLSMDQFVDLCILLGCDYVPKVPGIGPQRAWEGIQRYGNIESFLESLDAAKHMVPPDFCYREARAFFLNPEVTRAEEIDIRFSEPDEAGLIQFLVKEKLFNPDRVNKGIARLRAALTKKTQGRLDNFFTIVKAPPQAAAPRAPLAGRKRSHDGKCVHVSGTLQKATGGHKKAVRK</sequence>
<feature type="chain" id="PRO_0000403546" description="Flap endonuclease 1">
    <location>
        <begin position="1"/>
        <end position="395"/>
    </location>
</feature>
<feature type="region of interest" description="N-domain">
    <location>
        <begin position="1"/>
        <end position="108"/>
    </location>
</feature>
<feature type="region of interest" description="I-domain">
    <location>
        <begin position="126"/>
        <end position="257"/>
    </location>
</feature>
<feature type="region of interest" description="Interaction with PCNA" evidence="1">
    <location>
        <begin position="340"/>
        <end position="348"/>
    </location>
</feature>
<feature type="binding site" evidence="1">
    <location>
        <position position="34"/>
    </location>
    <ligand>
        <name>Mg(2+)</name>
        <dbReference type="ChEBI" id="CHEBI:18420"/>
        <label>1</label>
    </ligand>
</feature>
<feature type="binding site" evidence="1">
    <location>
        <position position="74"/>
    </location>
    <ligand>
        <name>DNA</name>
        <dbReference type="ChEBI" id="CHEBI:16991"/>
    </ligand>
</feature>
<feature type="binding site" evidence="1">
    <location>
        <position position="90"/>
    </location>
    <ligand>
        <name>Mg(2+)</name>
        <dbReference type="ChEBI" id="CHEBI:18420"/>
        <label>1</label>
    </ligand>
</feature>
<feature type="binding site" evidence="1">
    <location>
        <position position="162"/>
    </location>
    <ligand>
        <name>DNA</name>
        <dbReference type="ChEBI" id="CHEBI:16991"/>
    </ligand>
</feature>
<feature type="binding site" evidence="1">
    <location>
        <position position="162"/>
    </location>
    <ligand>
        <name>Mg(2+)</name>
        <dbReference type="ChEBI" id="CHEBI:18420"/>
        <label>1</label>
    </ligand>
</feature>
<feature type="binding site" evidence="1">
    <location>
        <position position="164"/>
    </location>
    <ligand>
        <name>Mg(2+)</name>
        <dbReference type="ChEBI" id="CHEBI:18420"/>
        <label>1</label>
    </ligand>
</feature>
<feature type="binding site" evidence="1">
    <location>
        <position position="183"/>
    </location>
    <ligand>
        <name>Mg(2+)</name>
        <dbReference type="ChEBI" id="CHEBI:18420"/>
        <label>2</label>
    </ligand>
</feature>
<feature type="binding site" evidence="1">
    <location>
        <position position="185"/>
    </location>
    <ligand>
        <name>Mg(2+)</name>
        <dbReference type="ChEBI" id="CHEBI:18420"/>
        <label>2</label>
    </ligand>
</feature>
<feature type="binding site" evidence="1">
    <location>
        <position position="235"/>
    </location>
    <ligand>
        <name>DNA</name>
        <dbReference type="ChEBI" id="CHEBI:16991"/>
    </ligand>
</feature>
<feature type="binding site" evidence="1">
    <location>
        <position position="237"/>
    </location>
    <ligand>
        <name>DNA</name>
        <dbReference type="ChEBI" id="CHEBI:16991"/>
    </ligand>
</feature>
<feature type="binding site" evidence="1">
    <location>
        <position position="237"/>
    </location>
    <ligand>
        <name>Mg(2+)</name>
        <dbReference type="ChEBI" id="CHEBI:18420"/>
        <label>2</label>
    </ligand>
</feature>
<gene>
    <name evidence="1" type="primary">FEN1</name>
    <name type="ORF">LbrM27_V2.0270</name>
    <name type="ORF">LbrM_27_0270</name>
</gene>
<comment type="function">
    <text evidence="1">Structure-specific nuclease with 5'-flap endonuclease and 5'-3' exonuclease activities involved in DNA replication and repair. During DNA replication, cleaves the 5'-overhanging flap structure that is generated by displacement synthesis when DNA polymerase encounters the 5'-end of a downstream Okazaki fragment. It enters the flap from the 5'-end and then tracks to cleave the flap base, leaving a nick for ligation. Also involved in the long patch base excision repair (LP-BER) pathway, by cleaving within the apurinic/apyrimidinic (AP) site-terminated flap. Acts as a genome stabilization factor that prevents flaps from equilibrating into structures that lead to duplications and deletions. Also possesses 5'-3' exonuclease activity on nicked or gapped double-stranded DNA, and exhibits RNase H activity. Also involved in replication and repair of rDNA and in repairing mitochondrial DNA.</text>
</comment>
<comment type="cofactor">
    <cofactor evidence="1">
        <name>Mg(2+)</name>
        <dbReference type="ChEBI" id="CHEBI:18420"/>
    </cofactor>
    <text evidence="1">Binds 2 magnesium ions per subunit. They probably participate in the reaction catalyzed by the enzyme. May bind an additional third magnesium ion after substrate binding.</text>
</comment>
<comment type="subunit">
    <text evidence="1">Interacts with PCNA. Three molecules of FEN1 bind to one PCNA trimer with each molecule binding to one PCNA monomer. PCNA stimulates the nuclease activity without altering cleavage specificity.</text>
</comment>
<comment type="subcellular location">
    <subcellularLocation>
        <location evidence="1">Nucleus</location>
        <location evidence="1">Nucleolus</location>
    </subcellularLocation>
    <subcellularLocation>
        <location evidence="1">Nucleus</location>
        <location evidence="1">Nucleoplasm</location>
    </subcellularLocation>
    <subcellularLocation>
        <location evidence="1">Mitochondrion</location>
    </subcellularLocation>
    <text evidence="1">Resides mostly in the nucleoli and relocalizes to the nucleoplasm upon DNA damage.</text>
</comment>
<comment type="PTM">
    <text evidence="1">Phosphorylated. Phosphorylation upon DNA damage induces relocalization to the nuclear plasma.</text>
</comment>
<comment type="similarity">
    <text evidence="1">Belongs to the XPG/RAD2 endonuclease family. FEN1 subfamily.</text>
</comment>
<keyword id="KW-0227">DNA damage</keyword>
<keyword id="KW-0234">DNA repair</keyword>
<keyword id="KW-0235">DNA replication</keyword>
<keyword id="KW-0255">Endonuclease</keyword>
<keyword id="KW-0269">Exonuclease</keyword>
<keyword id="KW-0378">Hydrolase</keyword>
<keyword id="KW-0460">Magnesium</keyword>
<keyword id="KW-0479">Metal-binding</keyword>
<keyword id="KW-0496">Mitochondrion</keyword>
<keyword id="KW-0540">Nuclease</keyword>
<keyword id="KW-0539">Nucleus</keyword>
<keyword id="KW-0597">Phosphoprotein</keyword>
<keyword id="KW-1185">Reference proteome</keyword>
<protein>
    <recommendedName>
        <fullName evidence="1">Flap endonuclease 1</fullName>
        <shortName evidence="1">FEN-1</shortName>
        <ecNumber evidence="1">3.1.-.-</ecNumber>
    </recommendedName>
    <alternativeName>
        <fullName evidence="1">Flap structure-specific endonuclease 1</fullName>
    </alternativeName>
</protein>
<organism>
    <name type="scientific">Leishmania braziliensis</name>
    <dbReference type="NCBI Taxonomy" id="5660"/>
    <lineage>
        <taxon>Eukaryota</taxon>
        <taxon>Discoba</taxon>
        <taxon>Euglenozoa</taxon>
        <taxon>Kinetoplastea</taxon>
        <taxon>Metakinetoplastina</taxon>
        <taxon>Trypanosomatida</taxon>
        <taxon>Trypanosomatidae</taxon>
        <taxon>Leishmaniinae</taxon>
        <taxon>Leishmania</taxon>
        <taxon>Leishmania braziliensis species complex</taxon>
    </lineage>
</organism>